<feature type="chain" id="PRO_0000190690" description="UPF0758 protein CT0611">
    <location>
        <begin position="1"/>
        <end position="222"/>
    </location>
</feature>
<feature type="domain" description="MPN" evidence="1">
    <location>
        <begin position="100"/>
        <end position="222"/>
    </location>
</feature>
<feature type="short sequence motif" description="JAMM motif" evidence="1">
    <location>
        <begin position="171"/>
        <end position="184"/>
    </location>
</feature>
<feature type="binding site" evidence="1">
    <location>
        <position position="171"/>
    </location>
    <ligand>
        <name>Zn(2+)</name>
        <dbReference type="ChEBI" id="CHEBI:29105"/>
        <note>catalytic</note>
    </ligand>
</feature>
<feature type="binding site" evidence="1">
    <location>
        <position position="173"/>
    </location>
    <ligand>
        <name>Zn(2+)</name>
        <dbReference type="ChEBI" id="CHEBI:29105"/>
        <note>catalytic</note>
    </ligand>
</feature>
<feature type="binding site" evidence="1">
    <location>
        <position position="184"/>
    </location>
    <ligand>
        <name>Zn(2+)</name>
        <dbReference type="ChEBI" id="CHEBI:29105"/>
        <note>catalytic</note>
    </ligand>
</feature>
<feature type="helix" evidence="3">
    <location>
        <begin position="104"/>
        <end position="111"/>
    </location>
</feature>
<feature type="strand" evidence="3">
    <location>
        <begin position="122"/>
        <end position="128"/>
    </location>
</feature>
<feature type="strand" evidence="3">
    <location>
        <begin position="133"/>
        <end position="144"/>
    </location>
</feature>
<feature type="helix" evidence="3">
    <location>
        <begin position="147"/>
        <end position="149"/>
    </location>
</feature>
<feature type="helix" evidence="3">
    <location>
        <begin position="152"/>
        <end position="161"/>
    </location>
</feature>
<feature type="strand" evidence="3">
    <location>
        <begin position="165"/>
        <end position="172"/>
    </location>
</feature>
<feature type="strand" evidence="3">
    <location>
        <begin position="174"/>
        <end position="176"/>
    </location>
</feature>
<feature type="helix" evidence="3">
    <location>
        <begin position="182"/>
        <end position="198"/>
    </location>
</feature>
<feature type="strand" evidence="3">
    <location>
        <begin position="201"/>
        <end position="208"/>
    </location>
</feature>
<feature type="strand" evidence="3">
    <location>
        <begin position="213"/>
        <end position="215"/>
    </location>
</feature>
<feature type="turn" evidence="3">
    <location>
        <begin position="216"/>
        <end position="220"/>
    </location>
</feature>
<protein>
    <recommendedName>
        <fullName>UPF0758 protein CT0611</fullName>
    </recommendedName>
</protein>
<keyword id="KW-0002">3D-structure</keyword>
<keyword id="KW-0378">Hydrolase</keyword>
<keyword id="KW-0479">Metal-binding</keyword>
<keyword id="KW-0482">Metalloprotease</keyword>
<keyword id="KW-0645">Protease</keyword>
<keyword id="KW-1185">Reference proteome</keyword>
<keyword id="KW-0862">Zinc</keyword>
<sequence length="222" mass="25057">MRIHDIDPDNRPRERFLRSGKESLSPAELLALILRSGTAGLNIIDTCNKLISEHGLERLADLSIQELQKTPGIGEAKAMQIAAIFELQRRLHFARNMNLKVKGARDVFEYMKGRIPDETKEHLFVLFLSTKNQILRHETITIGTLTASLIHPREIFKAAIRESAHSIILVHNHPSGDVQPSNADKQVTSILKKAGDLLQIELLDHVIVGNNDWFSFRDHALL</sequence>
<proteinExistence type="evidence at protein level"/>
<comment type="similarity">
    <text evidence="2">Belongs to the UPF0758 family.</text>
</comment>
<evidence type="ECO:0000255" key="1">
    <source>
        <dbReference type="PROSITE-ProRule" id="PRU01182"/>
    </source>
</evidence>
<evidence type="ECO:0000305" key="2"/>
<evidence type="ECO:0007829" key="3">
    <source>
        <dbReference type="PDB" id="2QLC"/>
    </source>
</evidence>
<reference key="1">
    <citation type="journal article" date="2002" name="Proc. Natl. Acad. Sci. U.S.A.">
        <title>The complete genome sequence of Chlorobium tepidum TLS, a photosynthetic, anaerobic, green-sulfur bacterium.</title>
        <authorList>
            <person name="Eisen J.A."/>
            <person name="Nelson K.E."/>
            <person name="Paulsen I.T."/>
            <person name="Heidelberg J.F."/>
            <person name="Wu M."/>
            <person name="Dodson R.J."/>
            <person name="DeBoy R.T."/>
            <person name="Gwinn M.L."/>
            <person name="Nelson W.C."/>
            <person name="Haft D.H."/>
            <person name="Hickey E.K."/>
            <person name="Peterson J.D."/>
            <person name="Durkin A.S."/>
            <person name="Kolonay J.F."/>
            <person name="Yang F."/>
            <person name="Holt I.E."/>
            <person name="Umayam L.A."/>
            <person name="Mason T.M."/>
            <person name="Brenner M."/>
            <person name="Shea T.P."/>
            <person name="Parksey D.S."/>
            <person name="Nierman W.C."/>
            <person name="Feldblyum T.V."/>
            <person name="Hansen C.L."/>
            <person name="Craven M.B."/>
            <person name="Radune D."/>
            <person name="Vamathevan J.J."/>
            <person name="Khouri H.M."/>
            <person name="White O."/>
            <person name="Gruber T.M."/>
            <person name="Ketchum K.A."/>
            <person name="Venter J.C."/>
            <person name="Tettelin H."/>
            <person name="Bryant D.A."/>
            <person name="Fraser C.M."/>
        </authorList>
    </citation>
    <scope>NUCLEOTIDE SEQUENCE [LARGE SCALE GENOMIC DNA]</scope>
    <source>
        <strain>ATCC 49652 / DSM 12025 / NBRC 103806 / TLS</strain>
    </source>
</reference>
<gene>
    <name type="ordered locus">CT0611</name>
</gene>
<name>Y611_CHLTE</name>
<organism>
    <name type="scientific">Chlorobaculum tepidum (strain ATCC 49652 / DSM 12025 / NBRC 103806 / TLS)</name>
    <name type="common">Chlorobium tepidum</name>
    <dbReference type="NCBI Taxonomy" id="194439"/>
    <lineage>
        <taxon>Bacteria</taxon>
        <taxon>Pseudomonadati</taxon>
        <taxon>Chlorobiota</taxon>
        <taxon>Chlorobiia</taxon>
        <taxon>Chlorobiales</taxon>
        <taxon>Chlorobiaceae</taxon>
        <taxon>Chlorobaculum</taxon>
    </lineage>
</organism>
<accession>Q8KES1</accession>
<dbReference type="EMBL" id="AE006470">
    <property type="protein sequence ID" value="AAM71853.1"/>
    <property type="molecule type" value="Genomic_DNA"/>
</dbReference>
<dbReference type="RefSeq" id="NP_661511.1">
    <property type="nucleotide sequence ID" value="NC_002932.3"/>
</dbReference>
<dbReference type="RefSeq" id="WP_010932298.1">
    <property type="nucleotide sequence ID" value="NC_002932.3"/>
</dbReference>
<dbReference type="PDB" id="2QLC">
    <property type="method" value="X-ray"/>
    <property type="resolution" value="2.30 A"/>
    <property type="chains" value="A/B/C/D/E/F/G/H=97-222"/>
</dbReference>
<dbReference type="PDBsum" id="2QLC"/>
<dbReference type="SMR" id="Q8KES1"/>
<dbReference type="STRING" id="194439.CT0611"/>
<dbReference type="EnsemblBacteria" id="AAM71853">
    <property type="protein sequence ID" value="AAM71853"/>
    <property type="gene ID" value="CT0611"/>
</dbReference>
<dbReference type="KEGG" id="cte:CT0611"/>
<dbReference type="PATRIC" id="fig|194439.7.peg.568"/>
<dbReference type="eggNOG" id="COG2003">
    <property type="taxonomic scope" value="Bacteria"/>
</dbReference>
<dbReference type="HOGENOM" id="CLU_073529_0_2_10"/>
<dbReference type="OrthoDB" id="9804482at2"/>
<dbReference type="EvolutionaryTrace" id="Q8KES1"/>
<dbReference type="Proteomes" id="UP000001007">
    <property type="component" value="Chromosome"/>
</dbReference>
<dbReference type="GO" id="GO:0046872">
    <property type="term" value="F:metal ion binding"/>
    <property type="evidence" value="ECO:0007669"/>
    <property type="project" value="UniProtKB-KW"/>
</dbReference>
<dbReference type="GO" id="GO:0008237">
    <property type="term" value="F:metallopeptidase activity"/>
    <property type="evidence" value="ECO:0007669"/>
    <property type="project" value="UniProtKB-KW"/>
</dbReference>
<dbReference type="GO" id="GO:0006508">
    <property type="term" value="P:proteolysis"/>
    <property type="evidence" value="ECO:0007669"/>
    <property type="project" value="UniProtKB-KW"/>
</dbReference>
<dbReference type="CDD" id="cd08071">
    <property type="entry name" value="MPN_DUF2466"/>
    <property type="match status" value="1"/>
</dbReference>
<dbReference type="Gene3D" id="3.40.140.10">
    <property type="entry name" value="Cytidine Deaminase, domain 2"/>
    <property type="match status" value="1"/>
</dbReference>
<dbReference type="InterPro" id="IPR037518">
    <property type="entry name" value="MPN"/>
</dbReference>
<dbReference type="InterPro" id="IPR025657">
    <property type="entry name" value="RadC_JAB"/>
</dbReference>
<dbReference type="InterPro" id="IPR010994">
    <property type="entry name" value="RuvA_2-like"/>
</dbReference>
<dbReference type="InterPro" id="IPR001405">
    <property type="entry name" value="UPF0758"/>
</dbReference>
<dbReference type="InterPro" id="IPR020891">
    <property type="entry name" value="UPF0758_CS"/>
</dbReference>
<dbReference type="InterPro" id="IPR046778">
    <property type="entry name" value="UPF0758_N"/>
</dbReference>
<dbReference type="NCBIfam" id="NF000642">
    <property type="entry name" value="PRK00024.1"/>
    <property type="match status" value="1"/>
</dbReference>
<dbReference type="NCBIfam" id="TIGR00608">
    <property type="entry name" value="radc"/>
    <property type="match status" value="1"/>
</dbReference>
<dbReference type="PANTHER" id="PTHR30471">
    <property type="entry name" value="DNA REPAIR PROTEIN RADC"/>
    <property type="match status" value="1"/>
</dbReference>
<dbReference type="PANTHER" id="PTHR30471:SF3">
    <property type="entry name" value="UPF0758 PROTEIN YEES-RELATED"/>
    <property type="match status" value="1"/>
</dbReference>
<dbReference type="Pfam" id="PF04002">
    <property type="entry name" value="RadC"/>
    <property type="match status" value="1"/>
</dbReference>
<dbReference type="Pfam" id="PF20582">
    <property type="entry name" value="UPF0758_N"/>
    <property type="match status" value="1"/>
</dbReference>
<dbReference type="SUPFAM" id="SSF102712">
    <property type="entry name" value="JAB1/MPN domain"/>
    <property type="match status" value="1"/>
</dbReference>
<dbReference type="SUPFAM" id="SSF47781">
    <property type="entry name" value="RuvA domain 2-like"/>
    <property type="match status" value="1"/>
</dbReference>
<dbReference type="PROSITE" id="PS50249">
    <property type="entry name" value="MPN"/>
    <property type="match status" value="1"/>
</dbReference>
<dbReference type="PROSITE" id="PS01302">
    <property type="entry name" value="UPF0758"/>
    <property type="match status" value="1"/>
</dbReference>